<proteinExistence type="evidence at protein level"/>
<sequence length="329" mass="33780">MKFSKVSLLAASASVALSAPVAVTVTQHVHQAATVVVQGIVRVENGQTLTTFITKGTQTASASPVATTSAPIVVANAQVDSIATSVIQESAVVAESATFEESSTETSEAFSTATATIQAVQTSASATQDDVTTTLTSSTQPTSTTTPTTTTTSPTTTTSPTTTASPTTTASPTTATTTQSTASSTQSSSSDFSTSMVNEHNTKRALHKDTGSLTWSDTLATYAQNYADSYDCSGNLVHSGGPYGENLALGYGTTGSVDAWYNEITSYDYSNPGFSESAGHFTQVVWKGTSEVGCGLKSCGGEWGDYIICSYKAAGNVIGEFADNVMPLA</sequence>
<keyword id="KW-0325">Glycoprotein</keyword>
<keyword id="KW-0445">Lipid transport</keyword>
<keyword id="KW-0446">Lipid-binding</keyword>
<keyword id="KW-1185">Reference proteome</keyword>
<keyword id="KW-0964">Secreted</keyword>
<keyword id="KW-0732">Signal</keyword>
<keyword id="KW-0813">Transport</keyword>
<name>PRY2_YEAST</name>
<comment type="function">
    <text evidence="4">Secreted protein required for efficient export of lipids such as acetylated sterols. Acts in detoxification of hydrophobic compounds.</text>
</comment>
<comment type="subcellular location">
    <subcellularLocation>
        <location evidence="3 4">Secreted</location>
    </subcellularLocation>
</comment>
<comment type="domain">
    <text evidence="4">The SCP domain is necessary and sufficient for lipid export and sterol-binding.</text>
</comment>
<comment type="PTM">
    <text evidence="4">O-glycosylated.</text>
</comment>
<comment type="similarity">
    <text evidence="5">Belongs to the CRISP family.</text>
</comment>
<evidence type="ECO:0000255" key="1"/>
<evidence type="ECO:0000256" key="2">
    <source>
        <dbReference type="SAM" id="MobiDB-lite"/>
    </source>
</evidence>
<evidence type="ECO:0000269" key="3">
    <source>
    </source>
</evidence>
<evidence type="ECO:0000269" key="4">
    <source>
    </source>
</evidence>
<evidence type="ECO:0000305" key="5"/>
<accession>P36110</accession>
<accession>D6VX78</accession>
<feature type="signal peptide" evidence="1">
    <location>
        <begin position="1"/>
        <end position="18"/>
    </location>
</feature>
<feature type="chain" id="PRO_0000006318" description="Protein PRY2">
    <location>
        <begin position="19"/>
        <end position="329"/>
    </location>
</feature>
<feature type="domain" description="SCP">
    <location>
        <begin position="197"/>
        <end position="311"/>
    </location>
</feature>
<feature type="region of interest" description="Disordered" evidence="2">
    <location>
        <begin position="122"/>
        <end position="197"/>
    </location>
</feature>
<feature type="compositionally biased region" description="Polar residues" evidence="2">
    <location>
        <begin position="122"/>
        <end position="131"/>
    </location>
</feature>
<feature type="compositionally biased region" description="Low complexity" evidence="2">
    <location>
        <begin position="132"/>
        <end position="190"/>
    </location>
</feature>
<reference key="1">
    <citation type="journal article" date="1994" name="Nature">
        <title>Complete DNA sequence of yeast chromosome XI.</title>
        <authorList>
            <person name="Dujon B."/>
            <person name="Alexandraki D."/>
            <person name="Andre B."/>
            <person name="Ansorge W."/>
            <person name="Baladron V."/>
            <person name="Ballesta J.P.G."/>
            <person name="Banrevi A."/>
            <person name="Bolle P.-A."/>
            <person name="Bolotin-Fukuhara M."/>
            <person name="Bossier P."/>
            <person name="Bou G."/>
            <person name="Boyer J."/>
            <person name="Buitrago M.J."/>
            <person name="Cheret G."/>
            <person name="Colleaux L."/>
            <person name="Daignan-Fornier B."/>
            <person name="del Rey F."/>
            <person name="Dion C."/>
            <person name="Domdey H."/>
            <person name="Duesterhoeft A."/>
            <person name="Duesterhus S."/>
            <person name="Entian K.-D."/>
            <person name="Erfle H."/>
            <person name="Esteban P.F."/>
            <person name="Feldmann H."/>
            <person name="Fernandes L."/>
            <person name="Fobo G.M."/>
            <person name="Fritz C."/>
            <person name="Fukuhara H."/>
            <person name="Gabel C."/>
            <person name="Gaillon L."/>
            <person name="Garcia-Cantalejo J.M."/>
            <person name="Garcia-Ramirez J.J."/>
            <person name="Gent M.E."/>
            <person name="Ghazvini M."/>
            <person name="Goffeau A."/>
            <person name="Gonzalez A."/>
            <person name="Grothues D."/>
            <person name="Guerreiro P."/>
            <person name="Hegemann J.H."/>
            <person name="Hewitt N."/>
            <person name="Hilger F."/>
            <person name="Hollenberg C.P."/>
            <person name="Horaitis O."/>
            <person name="Indge K.J."/>
            <person name="Jacquier A."/>
            <person name="James C.M."/>
            <person name="Jauniaux J.-C."/>
            <person name="Jimenez A."/>
            <person name="Keuchel H."/>
            <person name="Kirchrath L."/>
            <person name="Kleine K."/>
            <person name="Koetter P."/>
            <person name="Legrain P."/>
            <person name="Liebl S."/>
            <person name="Louis E.J."/>
            <person name="Maia e Silva A."/>
            <person name="Marck C."/>
            <person name="Monnier A.-L."/>
            <person name="Moestl D."/>
            <person name="Mueller S."/>
            <person name="Obermaier B."/>
            <person name="Oliver S.G."/>
            <person name="Pallier C."/>
            <person name="Pascolo S."/>
            <person name="Pfeiffer F."/>
            <person name="Philippsen P."/>
            <person name="Planta R.J."/>
            <person name="Pohl F.M."/>
            <person name="Pohl T.M."/>
            <person name="Poehlmann R."/>
            <person name="Portetelle D."/>
            <person name="Purnelle B."/>
            <person name="Puzos V."/>
            <person name="Ramezani Rad M."/>
            <person name="Rasmussen S.W."/>
            <person name="Remacha M.A."/>
            <person name="Revuelta J.L."/>
            <person name="Richard G.-F."/>
            <person name="Rieger M."/>
            <person name="Rodrigues-Pousada C."/>
            <person name="Rose M."/>
            <person name="Rupp T."/>
            <person name="Santos M.A."/>
            <person name="Schwager C."/>
            <person name="Sensen C."/>
            <person name="Skala J."/>
            <person name="Soares H."/>
            <person name="Sor F."/>
            <person name="Stegemann J."/>
            <person name="Tettelin H."/>
            <person name="Thierry A."/>
            <person name="Tzermia M."/>
            <person name="Urrestarazu L.A."/>
            <person name="van Dyck L."/>
            <person name="van Vliet-Reedijk J.C."/>
            <person name="Valens M."/>
            <person name="Vandenbol M."/>
            <person name="Vilela C."/>
            <person name="Vissers S."/>
            <person name="von Wettstein D."/>
            <person name="Voss H."/>
            <person name="Wiemann S."/>
            <person name="Xu G."/>
            <person name="Zimmermann J."/>
            <person name="Haasemann M."/>
            <person name="Becker I."/>
            <person name="Mewes H.-W."/>
        </authorList>
    </citation>
    <scope>NUCLEOTIDE SEQUENCE [LARGE SCALE GENOMIC DNA]</scope>
    <source>
        <strain>ATCC 204508 / S288c</strain>
    </source>
</reference>
<reference key="2">
    <citation type="journal article" date="2014" name="G3 (Bethesda)">
        <title>The reference genome sequence of Saccharomyces cerevisiae: Then and now.</title>
        <authorList>
            <person name="Engel S.R."/>
            <person name="Dietrich F.S."/>
            <person name="Fisk D.G."/>
            <person name="Binkley G."/>
            <person name="Balakrishnan R."/>
            <person name="Costanzo M.C."/>
            <person name="Dwight S.S."/>
            <person name="Hitz B.C."/>
            <person name="Karra K."/>
            <person name="Nash R.S."/>
            <person name="Weng S."/>
            <person name="Wong E.D."/>
            <person name="Lloyd P."/>
            <person name="Skrzypek M.S."/>
            <person name="Miyasato S.R."/>
            <person name="Simison M."/>
            <person name="Cherry J.M."/>
        </authorList>
    </citation>
    <scope>GENOME REANNOTATION</scope>
    <source>
        <strain>ATCC 204508 / S288c</strain>
    </source>
</reference>
<reference key="3">
    <citation type="journal article" date="2002" name="Curr. Genet.">
        <title>Sequence-based approach for identification of cell wall proteins in Saccharomyces cerevisiae.</title>
        <authorList>
            <person name="Terashima H."/>
            <person name="Fukuchi S."/>
            <person name="Nakai K."/>
            <person name="Arisawa M."/>
            <person name="Hamada K."/>
            <person name="Yabuki N."/>
            <person name="Kitada K."/>
        </authorList>
    </citation>
    <scope>SUBCELLULAR LOCATION</scope>
</reference>
<reference key="4">
    <citation type="journal article" date="2012" name="Proc. Natl. Acad. Sci. U.S.A.">
        <title>Pathogen-Related Yeast (PRY) proteins and members of the CAP superfamily are secreted sterol-binding proteins.</title>
        <authorList>
            <person name="Choudhary V."/>
            <person name="Schneiter R."/>
        </authorList>
    </citation>
    <scope>FUNCTION</scope>
    <scope>STEROL-BINDING</scope>
    <scope>SUBCELLULAR LOCATION</scope>
    <scope>GLYCOSYLATION</scope>
</reference>
<dbReference type="EMBL" id="Z28238">
    <property type="protein sequence ID" value="CAA82084.1"/>
    <property type="molecule type" value="Genomic_DNA"/>
</dbReference>
<dbReference type="EMBL" id="Z28237">
    <property type="protein sequence ID" value="CAA82083.1"/>
    <property type="molecule type" value="Genomic_DNA"/>
</dbReference>
<dbReference type="EMBL" id="BK006944">
    <property type="protein sequence ID" value="DAA09168.1"/>
    <property type="molecule type" value="Genomic_DNA"/>
</dbReference>
<dbReference type="PIR" id="S38082">
    <property type="entry name" value="S38082"/>
</dbReference>
<dbReference type="RefSeq" id="NP_012938.3">
    <property type="nucleotide sequence ID" value="NM_001179803.3"/>
</dbReference>
<dbReference type="SMR" id="P36110"/>
<dbReference type="BioGRID" id="34145">
    <property type="interactions" value="82"/>
</dbReference>
<dbReference type="FunCoup" id="P36110">
    <property type="interactions" value="89"/>
</dbReference>
<dbReference type="IntAct" id="P36110">
    <property type="interactions" value="1"/>
</dbReference>
<dbReference type="STRING" id="4932.YKR013W"/>
<dbReference type="GlyGen" id="P36110">
    <property type="glycosylation" value="1 site"/>
</dbReference>
<dbReference type="PaxDb" id="4932-YKR013W"/>
<dbReference type="PeptideAtlas" id="P36110"/>
<dbReference type="EnsemblFungi" id="YKR013W_mRNA">
    <property type="protein sequence ID" value="YKR013W"/>
    <property type="gene ID" value="YKR013W"/>
</dbReference>
<dbReference type="GeneID" id="853882"/>
<dbReference type="KEGG" id="sce:YKR013W"/>
<dbReference type="AGR" id="SGD:S000001721"/>
<dbReference type="SGD" id="S000001721">
    <property type="gene designation" value="PRY2"/>
</dbReference>
<dbReference type="VEuPathDB" id="FungiDB:YKR013W"/>
<dbReference type="eggNOG" id="KOG3017">
    <property type="taxonomic scope" value="Eukaryota"/>
</dbReference>
<dbReference type="GeneTree" id="ENSGT00980000198854"/>
<dbReference type="HOGENOM" id="CLU_035730_3_0_1"/>
<dbReference type="InParanoid" id="P36110"/>
<dbReference type="OMA" id="NHNVHRS"/>
<dbReference type="OrthoDB" id="337038at2759"/>
<dbReference type="BioCyc" id="YEAST:G3O-31989-MONOMER"/>
<dbReference type="BioGRID-ORCS" id="853882">
    <property type="hits" value="10 hits in 10 CRISPR screens"/>
</dbReference>
<dbReference type="PRO" id="PR:P36110"/>
<dbReference type="Proteomes" id="UP000002311">
    <property type="component" value="Chromosome XI"/>
</dbReference>
<dbReference type="RNAct" id="P36110">
    <property type="molecule type" value="protein"/>
</dbReference>
<dbReference type="GO" id="GO:0005783">
    <property type="term" value="C:endoplasmic reticulum"/>
    <property type="evidence" value="ECO:0007005"/>
    <property type="project" value="SGD"/>
</dbReference>
<dbReference type="GO" id="GO:0005576">
    <property type="term" value="C:extracellular region"/>
    <property type="evidence" value="ECO:0000314"/>
    <property type="project" value="SGD"/>
</dbReference>
<dbReference type="GO" id="GO:0005615">
    <property type="term" value="C:extracellular space"/>
    <property type="evidence" value="ECO:0000318"/>
    <property type="project" value="GO_Central"/>
</dbReference>
<dbReference type="GO" id="GO:0000324">
    <property type="term" value="C:fungal-type vacuole"/>
    <property type="evidence" value="ECO:0007005"/>
    <property type="project" value="SGD"/>
</dbReference>
<dbReference type="GO" id="GO:0032934">
    <property type="term" value="F:sterol binding"/>
    <property type="evidence" value="ECO:0000314"/>
    <property type="project" value="SGD"/>
</dbReference>
<dbReference type="GO" id="GO:0015908">
    <property type="term" value="P:fatty acid transport"/>
    <property type="evidence" value="ECO:0000316"/>
    <property type="project" value="SGD"/>
</dbReference>
<dbReference type="GO" id="GO:0019953">
    <property type="term" value="P:sexual reproduction"/>
    <property type="evidence" value="ECO:0000318"/>
    <property type="project" value="GO_Central"/>
</dbReference>
<dbReference type="GO" id="GO:0015918">
    <property type="term" value="P:sterol transport"/>
    <property type="evidence" value="ECO:0000315"/>
    <property type="project" value="SGD"/>
</dbReference>
<dbReference type="CDD" id="cd05384">
    <property type="entry name" value="CAP_PRY1-like"/>
    <property type="match status" value="1"/>
</dbReference>
<dbReference type="FunFam" id="3.40.33.10:FF:000012">
    <property type="entry name" value="Secreted protein PRY1"/>
    <property type="match status" value="1"/>
</dbReference>
<dbReference type="Gene3D" id="3.40.33.10">
    <property type="entry name" value="CAP"/>
    <property type="match status" value="1"/>
</dbReference>
<dbReference type="InterPro" id="IPR018244">
    <property type="entry name" value="Allrgn_V5/Tpx1_CS"/>
</dbReference>
<dbReference type="InterPro" id="IPR014044">
    <property type="entry name" value="CAP_dom"/>
</dbReference>
<dbReference type="InterPro" id="IPR035940">
    <property type="entry name" value="CAP_sf"/>
</dbReference>
<dbReference type="InterPro" id="IPR001283">
    <property type="entry name" value="CRISP-related"/>
</dbReference>
<dbReference type="PANTHER" id="PTHR10334">
    <property type="entry name" value="CYSTEINE-RICH SECRETORY PROTEIN-RELATED"/>
    <property type="match status" value="1"/>
</dbReference>
<dbReference type="Pfam" id="PF00188">
    <property type="entry name" value="CAP"/>
    <property type="match status" value="1"/>
</dbReference>
<dbReference type="PRINTS" id="PR00837">
    <property type="entry name" value="V5TPXLIKE"/>
</dbReference>
<dbReference type="SMART" id="SM00198">
    <property type="entry name" value="SCP"/>
    <property type="match status" value="1"/>
</dbReference>
<dbReference type="SUPFAM" id="SSF55797">
    <property type="entry name" value="PR-1-like"/>
    <property type="match status" value="1"/>
</dbReference>
<dbReference type="PROSITE" id="PS01009">
    <property type="entry name" value="CRISP_1"/>
    <property type="match status" value="1"/>
</dbReference>
<dbReference type="PROSITE" id="PS01010">
    <property type="entry name" value="CRISP_2"/>
    <property type="match status" value="1"/>
</dbReference>
<organism>
    <name type="scientific">Saccharomyces cerevisiae (strain ATCC 204508 / S288c)</name>
    <name type="common">Baker's yeast</name>
    <dbReference type="NCBI Taxonomy" id="559292"/>
    <lineage>
        <taxon>Eukaryota</taxon>
        <taxon>Fungi</taxon>
        <taxon>Dikarya</taxon>
        <taxon>Ascomycota</taxon>
        <taxon>Saccharomycotina</taxon>
        <taxon>Saccharomycetes</taxon>
        <taxon>Saccharomycetales</taxon>
        <taxon>Saccharomycetaceae</taxon>
        <taxon>Saccharomyces</taxon>
    </lineage>
</organism>
<gene>
    <name type="primary">PRY2</name>
    <name type="ordered locus">YKR013W</name>
    <name type="ORF">YK111</name>
</gene>
<protein>
    <recommendedName>
        <fullName>Protein PRY2</fullName>
    </recommendedName>
    <alternativeName>
        <fullName>Pathogenesis-related protein 2</fullName>
    </alternativeName>
</protein>